<protein>
    <recommendedName>
        <fullName>Uncharacterized protein YqjL</fullName>
    </recommendedName>
</protein>
<sequence length="253" mass="28172">MKSAWMEKTYTIDGCAFHTQHRKGSSGVTIVFEAGYGTSSETWKPLMADIDDEFGIFTYDRAGIGKSGQSRAKRTADQQVKELESLLKAADVKPPYLAVSHSYGAVITGLWACKNKHDIIGMVLLDPALGDCASFTFIPEEMHKSHTRKMMLEGTHAEFSKSLQELKKRQVHLGNMPLLVLSSGERTEKFAAEQEWQNLHSSILSLSNQSGWIQAKNSSHNIHHDEPHIVHLAIYDVWCAACQQAAPLYQAVN</sequence>
<dbReference type="EMBL" id="D84432">
    <property type="protein sequence ID" value="BAA12618.1"/>
    <property type="molecule type" value="Genomic_DNA"/>
</dbReference>
<dbReference type="EMBL" id="AL009126">
    <property type="protein sequence ID" value="CAB14315.1"/>
    <property type="molecule type" value="Genomic_DNA"/>
</dbReference>
<dbReference type="PIR" id="D69964">
    <property type="entry name" value="D69964"/>
</dbReference>
<dbReference type="RefSeq" id="NP_390264.1">
    <property type="nucleotide sequence ID" value="NC_000964.3"/>
</dbReference>
<dbReference type="RefSeq" id="WP_003230373.1">
    <property type="nucleotide sequence ID" value="NZ_OZ025638.1"/>
</dbReference>
<dbReference type="SMR" id="P54549"/>
<dbReference type="FunCoup" id="P54549">
    <property type="interactions" value="58"/>
</dbReference>
<dbReference type="STRING" id="224308.BSU23830"/>
<dbReference type="ESTHER" id="bacsu-yqjl">
    <property type="family name" value="6_AlphaBeta_hydrolase"/>
</dbReference>
<dbReference type="PaxDb" id="224308-BSU23830"/>
<dbReference type="DNASU" id="938693"/>
<dbReference type="EnsemblBacteria" id="CAB14315">
    <property type="protein sequence ID" value="CAB14315"/>
    <property type="gene ID" value="BSU_23830"/>
</dbReference>
<dbReference type="GeneID" id="938693"/>
<dbReference type="KEGG" id="bsu:BSU23830"/>
<dbReference type="PATRIC" id="fig|224308.179.peg.2596"/>
<dbReference type="eggNOG" id="COG0596">
    <property type="taxonomic scope" value="Bacteria"/>
</dbReference>
<dbReference type="InParanoid" id="P54549"/>
<dbReference type="OrthoDB" id="59888at2"/>
<dbReference type="PhylomeDB" id="P54549"/>
<dbReference type="BioCyc" id="BSUB:BSU23830-MONOMER"/>
<dbReference type="Proteomes" id="UP000001570">
    <property type="component" value="Chromosome"/>
</dbReference>
<dbReference type="Gene3D" id="3.40.50.1820">
    <property type="entry name" value="alpha/beta hydrolase"/>
    <property type="match status" value="1"/>
</dbReference>
<dbReference type="InterPro" id="IPR000073">
    <property type="entry name" value="AB_hydrolase_1"/>
</dbReference>
<dbReference type="InterPro" id="IPR029058">
    <property type="entry name" value="AB_hydrolase_fold"/>
</dbReference>
<dbReference type="InterPro" id="IPR050266">
    <property type="entry name" value="AB_hydrolase_sf"/>
</dbReference>
<dbReference type="PANTHER" id="PTHR43798">
    <property type="entry name" value="MONOACYLGLYCEROL LIPASE"/>
    <property type="match status" value="1"/>
</dbReference>
<dbReference type="PANTHER" id="PTHR43798:SF5">
    <property type="entry name" value="MONOACYLGLYCEROL LIPASE ABHD6"/>
    <property type="match status" value="1"/>
</dbReference>
<dbReference type="Pfam" id="PF00561">
    <property type="entry name" value="Abhydrolase_1"/>
    <property type="match status" value="1"/>
</dbReference>
<dbReference type="SUPFAM" id="SSF53474">
    <property type="entry name" value="alpha/beta-Hydrolases"/>
    <property type="match status" value="1"/>
</dbReference>
<name>YQJL_BACSU</name>
<keyword id="KW-1185">Reference proteome</keyword>
<gene>
    <name type="primary">yqjL</name>
    <name type="ordered locus">BSU23830</name>
</gene>
<feature type="chain" id="PRO_0000049831" description="Uncharacterized protein YqjL">
    <location>
        <begin position="1"/>
        <end position="253"/>
    </location>
</feature>
<organism>
    <name type="scientific">Bacillus subtilis (strain 168)</name>
    <dbReference type="NCBI Taxonomy" id="224308"/>
    <lineage>
        <taxon>Bacteria</taxon>
        <taxon>Bacillati</taxon>
        <taxon>Bacillota</taxon>
        <taxon>Bacilli</taxon>
        <taxon>Bacillales</taxon>
        <taxon>Bacillaceae</taxon>
        <taxon>Bacillus</taxon>
    </lineage>
</organism>
<accession>P54549</accession>
<proteinExistence type="predicted"/>
<reference key="1">
    <citation type="journal article" date="1996" name="Microbiology">
        <title>Systematic sequencing of the 283 kb 210 degrees-232 degrees region of the Bacillus subtilis genome containing the skin element and many sporulation genes.</title>
        <authorList>
            <person name="Mizuno M."/>
            <person name="Masuda S."/>
            <person name="Takemaru K."/>
            <person name="Hosono S."/>
            <person name="Sato T."/>
            <person name="Takeuchi M."/>
            <person name="Kobayashi Y."/>
        </authorList>
    </citation>
    <scope>NUCLEOTIDE SEQUENCE [GENOMIC DNA]</scope>
    <source>
        <strain>168 / JH642</strain>
    </source>
</reference>
<reference key="2">
    <citation type="journal article" date="1997" name="Nature">
        <title>The complete genome sequence of the Gram-positive bacterium Bacillus subtilis.</title>
        <authorList>
            <person name="Kunst F."/>
            <person name="Ogasawara N."/>
            <person name="Moszer I."/>
            <person name="Albertini A.M."/>
            <person name="Alloni G."/>
            <person name="Azevedo V."/>
            <person name="Bertero M.G."/>
            <person name="Bessieres P."/>
            <person name="Bolotin A."/>
            <person name="Borchert S."/>
            <person name="Borriss R."/>
            <person name="Boursier L."/>
            <person name="Brans A."/>
            <person name="Braun M."/>
            <person name="Brignell S.C."/>
            <person name="Bron S."/>
            <person name="Brouillet S."/>
            <person name="Bruschi C.V."/>
            <person name="Caldwell B."/>
            <person name="Capuano V."/>
            <person name="Carter N.M."/>
            <person name="Choi S.-K."/>
            <person name="Codani J.-J."/>
            <person name="Connerton I.F."/>
            <person name="Cummings N.J."/>
            <person name="Daniel R.A."/>
            <person name="Denizot F."/>
            <person name="Devine K.M."/>
            <person name="Duesterhoeft A."/>
            <person name="Ehrlich S.D."/>
            <person name="Emmerson P.T."/>
            <person name="Entian K.-D."/>
            <person name="Errington J."/>
            <person name="Fabret C."/>
            <person name="Ferrari E."/>
            <person name="Foulger D."/>
            <person name="Fritz C."/>
            <person name="Fujita M."/>
            <person name="Fujita Y."/>
            <person name="Fuma S."/>
            <person name="Galizzi A."/>
            <person name="Galleron N."/>
            <person name="Ghim S.-Y."/>
            <person name="Glaser P."/>
            <person name="Goffeau A."/>
            <person name="Golightly E.J."/>
            <person name="Grandi G."/>
            <person name="Guiseppi G."/>
            <person name="Guy B.J."/>
            <person name="Haga K."/>
            <person name="Haiech J."/>
            <person name="Harwood C.R."/>
            <person name="Henaut A."/>
            <person name="Hilbert H."/>
            <person name="Holsappel S."/>
            <person name="Hosono S."/>
            <person name="Hullo M.-F."/>
            <person name="Itaya M."/>
            <person name="Jones L.-M."/>
            <person name="Joris B."/>
            <person name="Karamata D."/>
            <person name="Kasahara Y."/>
            <person name="Klaerr-Blanchard M."/>
            <person name="Klein C."/>
            <person name="Kobayashi Y."/>
            <person name="Koetter P."/>
            <person name="Koningstein G."/>
            <person name="Krogh S."/>
            <person name="Kumano M."/>
            <person name="Kurita K."/>
            <person name="Lapidus A."/>
            <person name="Lardinois S."/>
            <person name="Lauber J."/>
            <person name="Lazarevic V."/>
            <person name="Lee S.-M."/>
            <person name="Levine A."/>
            <person name="Liu H."/>
            <person name="Masuda S."/>
            <person name="Mauel C."/>
            <person name="Medigue C."/>
            <person name="Medina N."/>
            <person name="Mellado R.P."/>
            <person name="Mizuno M."/>
            <person name="Moestl D."/>
            <person name="Nakai S."/>
            <person name="Noback M."/>
            <person name="Noone D."/>
            <person name="O'Reilly M."/>
            <person name="Ogawa K."/>
            <person name="Ogiwara A."/>
            <person name="Oudega B."/>
            <person name="Park S.-H."/>
            <person name="Parro V."/>
            <person name="Pohl T.M."/>
            <person name="Portetelle D."/>
            <person name="Porwollik S."/>
            <person name="Prescott A.M."/>
            <person name="Presecan E."/>
            <person name="Pujic P."/>
            <person name="Purnelle B."/>
            <person name="Rapoport G."/>
            <person name="Rey M."/>
            <person name="Reynolds S."/>
            <person name="Rieger M."/>
            <person name="Rivolta C."/>
            <person name="Rocha E."/>
            <person name="Roche B."/>
            <person name="Rose M."/>
            <person name="Sadaie Y."/>
            <person name="Sato T."/>
            <person name="Scanlan E."/>
            <person name="Schleich S."/>
            <person name="Schroeter R."/>
            <person name="Scoffone F."/>
            <person name="Sekiguchi J."/>
            <person name="Sekowska A."/>
            <person name="Seror S.J."/>
            <person name="Serror P."/>
            <person name="Shin B.-S."/>
            <person name="Soldo B."/>
            <person name="Sorokin A."/>
            <person name="Tacconi E."/>
            <person name="Takagi T."/>
            <person name="Takahashi H."/>
            <person name="Takemaru K."/>
            <person name="Takeuchi M."/>
            <person name="Tamakoshi A."/>
            <person name="Tanaka T."/>
            <person name="Terpstra P."/>
            <person name="Tognoni A."/>
            <person name="Tosato V."/>
            <person name="Uchiyama S."/>
            <person name="Vandenbol M."/>
            <person name="Vannier F."/>
            <person name="Vassarotti A."/>
            <person name="Viari A."/>
            <person name="Wambutt R."/>
            <person name="Wedler E."/>
            <person name="Wedler H."/>
            <person name="Weitzenegger T."/>
            <person name="Winters P."/>
            <person name="Wipat A."/>
            <person name="Yamamoto H."/>
            <person name="Yamane K."/>
            <person name="Yasumoto K."/>
            <person name="Yata K."/>
            <person name="Yoshida K."/>
            <person name="Yoshikawa H.-F."/>
            <person name="Zumstein E."/>
            <person name="Yoshikawa H."/>
            <person name="Danchin A."/>
        </authorList>
    </citation>
    <scope>NUCLEOTIDE SEQUENCE [LARGE SCALE GENOMIC DNA]</scope>
    <source>
        <strain>168</strain>
    </source>
</reference>